<reference key="1">
    <citation type="journal article" date="2004" name="Proc. Natl. Acad. Sci. U.S.A.">
        <title>Genome sequence of the enterobacterial phytopathogen Erwinia carotovora subsp. atroseptica and characterization of virulence factors.</title>
        <authorList>
            <person name="Bell K.S."/>
            <person name="Sebaihia M."/>
            <person name="Pritchard L."/>
            <person name="Holden M.T.G."/>
            <person name="Hyman L.J."/>
            <person name="Holeva M.C."/>
            <person name="Thomson N.R."/>
            <person name="Bentley S.D."/>
            <person name="Churcher L.J.C."/>
            <person name="Mungall K."/>
            <person name="Atkin R."/>
            <person name="Bason N."/>
            <person name="Brooks K."/>
            <person name="Chillingworth T."/>
            <person name="Clark K."/>
            <person name="Doggett J."/>
            <person name="Fraser A."/>
            <person name="Hance Z."/>
            <person name="Hauser H."/>
            <person name="Jagels K."/>
            <person name="Moule S."/>
            <person name="Norbertczak H."/>
            <person name="Ormond D."/>
            <person name="Price C."/>
            <person name="Quail M.A."/>
            <person name="Sanders M."/>
            <person name="Walker D."/>
            <person name="Whitehead S."/>
            <person name="Salmond G.P.C."/>
            <person name="Birch P.R.J."/>
            <person name="Parkhill J."/>
            <person name="Toth I.K."/>
        </authorList>
    </citation>
    <scope>NUCLEOTIDE SEQUENCE [LARGE SCALE GENOMIC DNA]</scope>
    <source>
        <strain>SCRI 1043 / ATCC BAA-672</strain>
    </source>
</reference>
<organism>
    <name type="scientific">Pectobacterium atrosepticum (strain SCRI 1043 / ATCC BAA-672)</name>
    <name type="common">Erwinia carotovora subsp. atroseptica</name>
    <dbReference type="NCBI Taxonomy" id="218491"/>
    <lineage>
        <taxon>Bacteria</taxon>
        <taxon>Pseudomonadati</taxon>
        <taxon>Pseudomonadota</taxon>
        <taxon>Gammaproteobacteria</taxon>
        <taxon>Enterobacterales</taxon>
        <taxon>Pectobacteriaceae</taxon>
        <taxon>Pectobacterium</taxon>
    </lineage>
</organism>
<proteinExistence type="inferred from homology"/>
<gene>
    <name evidence="2" type="primary">infB</name>
    <name type="ordered locus">ECA0712</name>
</gene>
<feature type="chain" id="PRO_0000228197" description="Translation initiation factor IF-2">
    <location>
        <begin position="1"/>
        <end position="900"/>
    </location>
</feature>
<feature type="domain" description="tr-type G">
    <location>
        <begin position="399"/>
        <end position="568"/>
    </location>
</feature>
<feature type="region of interest" description="Disordered" evidence="3">
    <location>
        <begin position="48"/>
        <end position="310"/>
    </location>
</feature>
<feature type="region of interest" description="G1" evidence="1">
    <location>
        <begin position="408"/>
        <end position="415"/>
    </location>
</feature>
<feature type="region of interest" description="G2" evidence="1">
    <location>
        <begin position="433"/>
        <end position="437"/>
    </location>
</feature>
<feature type="region of interest" description="G3" evidence="1">
    <location>
        <begin position="454"/>
        <end position="457"/>
    </location>
</feature>
<feature type="region of interest" description="G4" evidence="1">
    <location>
        <begin position="508"/>
        <end position="511"/>
    </location>
</feature>
<feature type="region of interest" description="G5" evidence="1">
    <location>
        <begin position="544"/>
        <end position="546"/>
    </location>
</feature>
<feature type="compositionally biased region" description="Polar residues" evidence="3">
    <location>
        <begin position="68"/>
        <end position="82"/>
    </location>
</feature>
<feature type="compositionally biased region" description="Basic and acidic residues" evidence="3">
    <location>
        <begin position="85"/>
        <end position="98"/>
    </location>
</feature>
<feature type="compositionally biased region" description="Basic and acidic residues" evidence="3">
    <location>
        <begin position="108"/>
        <end position="164"/>
    </location>
</feature>
<feature type="compositionally biased region" description="Polar residues" evidence="3">
    <location>
        <begin position="165"/>
        <end position="176"/>
    </location>
</feature>
<feature type="compositionally biased region" description="Basic and acidic residues" evidence="3">
    <location>
        <begin position="177"/>
        <end position="237"/>
    </location>
</feature>
<feature type="compositionally biased region" description="Basic residues" evidence="3">
    <location>
        <begin position="263"/>
        <end position="277"/>
    </location>
</feature>
<feature type="compositionally biased region" description="Basic and acidic residues" evidence="3">
    <location>
        <begin position="278"/>
        <end position="291"/>
    </location>
</feature>
<feature type="binding site" evidence="2">
    <location>
        <begin position="408"/>
        <end position="415"/>
    </location>
    <ligand>
        <name>GTP</name>
        <dbReference type="ChEBI" id="CHEBI:37565"/>
    </ligand>
</feature>
<feature type="binding site" evidence="2">
    <location>
        <begin position="454"/>
        <end position="458"/>
    </location>
    <ligand>
        <name>GTP</name>
        <dbReference type="ChEBI" id="CHEBI:37565"/>
    </ligand>
</feature>
<feature type="binding site" evidence="2">
    <location>
        <begin position="508"/>
        <end position="511"/>
    </location>
    <ligand>
        <name>GTP</name>
        <dbReference type="ChEBI" id="CHEBI:37565"/>
    </ligand>
</feature>
<protein>
    <recommendedName>
        <fullName evidence="2">Translation initiation factor IF-2</fullName>
    </recommendedName>
</protein>
<dbReference type="EMBL" id="BX950851">
    <property type="protein sequence ID" value="CAG73627.1"/>
    <property type="molecule type" value="Genomic_DNA"/>
</dbReference>
<dbReference type="RefSeq" id="WP_011092323.1">
    <property type="nucleotide sequence ID" value="NC_004547.2"/>
</dbReference>
<dbReference type="SMR" id="Q6D9A5"/>
<dbReference type="STRING" id="218491.ECA0712"/>
<dbReference type="GeneID" id="57207441"/>
<dbReference type="KEGG" id="eca:ECA0712"/>
<dbReference type="PATRIC" id="fig|218491.5.peg.710"/>
<dbReference type="eggNOG" id="COG0532">
    <property type="taxonomic scope" value="Bacteria"/>
</dbReference>
<dbReference type="HOGENOM" id="CLU_006301_6_3_6"/>
<dbReference type="OrthoDB" id="9811804at2"/>
<dbReference type="Proteomes" id="UP000007966">
    <property type="component" value="Chromosome"/>
</dbReference>
<dbReference type="GO" id="GO:0005829">
    <property type="term" value="C:cytosol"/>
    <property type="evidence" value="ECO:0007669"/>
    <property type="project" value="TreeGrafter"/>
</dbReference>
<dbReference type="GO" id="GO:0005525">
    <property type="term" value="F:GTP binding"/>
    <property type="evidence" value="ECO:0007669"/>
    <property type="project" value="UniProtKB-KW"/>
</dbReference>
<dbReference type="GO" id="GO:0003924">
    <property type="term" value="F:GTPase activity"/>
    <property type="evidence" value="ECO:0007669"/>
    <property type="project" value="UniProtKB-UniRule"/>
</dbReference>
<dbReference type="GO" id="GO:0097216">
    <property type="term" value="F:guanosine tetraphosphate binding"/>
    <property type="evidence" value="ECO:0007669"/>
    <property type="project" value="UniProtKB-ARBA"/>
</dbReference>
<dbReference type="GO" id="GO:0003743">
    <property type="term" value="F:translation initiation factor activity"/>
    <property type="evidence" value="ECO:0007669"/>
    <property type="project" value="UniProtKB-UniRule"/>
</dbReference>
<dbReference type="CDD" id="cd01887">
    <property type="entry name" value="IF2_eIF5B"/>
    <property type="match status" value="1"/>
</dbReference>
<dbReference type="CDD" id="cd03702">
    <property type="entry name" value="IF2_mtIF2_II"/>
    <property type="match status" value="1"/>
</dbReference>
<dbReference type="CDD" id="cd03692">
    <property type="entry name" value="mtIF2_IVc"/>
    <property type="match status" value="1"/>
</dbReference>
<dbReference type="FunFam" id="2.40.30.10:FF:000007">
    <property type="entry name" value="Translation initiation factor IF-2"/>
    <property type="match status" value="1"/>
</dbReference>
<dbReference type="FunFam" id="2.40.30.10:FF:000008">
    <property type="entry name" value="Translation initiation factor IF-2"/>
    <property type="match status" value="1"/>
</dbReference>
<dbReference type="FunFam" id="3.30.56.50:FF:000001">
    <property type="entry name" value="Translation initiation factor IF-2"/>
    <property type="match status" value="1"/>
</dbReference>
<dbReference type="FunFam" id="3.40.50.10050:FF:000001">
    <property type="entry name" value="Translation initiation factor IF-2"/>
    <property type="match status" value="1"/>
</dbReference>
<dbReference type="FunFam" id="3.40.50.300:FF:000019">
    <property type="entry name" value="Translation initiation factor IF-2"/>
    <property type="match status" value="1"/>
</dbReference>
<dbReference type="Gene3D" id="3.40.50.300">
    <property type="entry name" value="P-loop containing nucleotide triphosphate hydrolases"/>
    <property type="match status" value="1"/>
</dbReference>
<dbReference type="Gene3D" id="3.30.56.50">
    <property type="entry name" value="Putative DNA-binding domain, N-terminal subdomain of bacterial translation initiation factor IF2"/>
    <property type="match status" value="1"/>
</dbReference>
<dbReference type="Gene3D" id="2.40.30.10">
    <property type="entry name" value="Translation factors"/>
    <property type="match status" value="2"/>
</dbReference>
<dbReference type="Gene3D" id="3.40.50.10050">
    <property type="entry name" value="Translation initiation factor IF- 2, domain 3"/>
    <property type="match status" value="1"/>
</dbReference>
<dbReference type="HAMAP" id="MF_00100_B">
    <property type="entry name" value="IF_2_B"/>
    <property type="match status" value="1"/>
</dbReference>
<dbReference type="InterPro" id="IPR009061">
    <property type="entry name" value="DNA-bd_dom_put_sf"/>
</dbReference>
<dbReference type="InterPro" id="IPR053905">
    <property type="entry name" value="EF-G-like_DII"/>
</dbReference>
<dbReference type="InterPro" id="IPR004161">
    <property type="entry name" value="EFTu-like_2"/>
</dbReference>
<dbReference type="InterPro" id="IPR013575">
    <property type="entry name" value="IF2_assoc_dom_bac"/>
</dbReference>
<dbReference type="InterPro" id="IPR044145">
    <property type="entry name" value="IF2_II"/>
</dbReference>
<dbReference type="InterPro" id="IPR006847">
    <property type="entry name" value="IF2_N"/>
</dbReference>
<dbReference type="InterPro" id="IPR027417">
    <property type="entry name" value="P-loop_NTPase"/>
</dbReference>
<dbReference type="InterPro" id="IPR005225">
    <property type="entry name" value="Small_GTP-bd"/>
</dbReference>
<dbReference type="InterPro" id="IPR000795">
    <property type="entry name" value="T_Tr_GTP-bd_dom"/>
</dbReference>
<dbReference type="InterPro" id="IPR000178">
    <property type="entry name" value="TF_IF2_bacterial-like"/>
</dbReference>
<dbReference type="InterPro" id="IPR015760">
    <property type="entry name" value="TIF_IF2"/>
</dbReference>
<dbReference type="InterPro" id="IPR023115">
    <property type="entry name" value="TIF_IF2_dom3"/>
</dbReference>
<dbReference type="InterPro" id="IPR036925">
    <property type="entry name" value="TIF_IF2_dom3_sf"/>
</dbReference>
<dbReference type="InterPro" id="IPR009000">
    <property type="entry name" value="Transl_B-barrel_sf"/>
</dbReference>
<dbReference type="NCBIfam" id="TIGR00487">
    <property type="entry name" value="IF-2"/>
    <property type="match status" value="1"/>
</dbReference>
<dbReference type="NCBIfam" id="TIGR00231">
    <property type="entry name" value="small_GTP"/>
    <property type="match status" value="1"/>
</dbReference>
<dbReference type="PANTHER" id="PTHR43381:SF5">
    <property type="entry name" value="TR-TYPE G DOMAIN-CONTAINING PROTEIN"/>
    <property type="match status" value="1"/>
</dbReference>
<dbReference type="PANTHER" id="PTHR43381">
    <property type="entry name" value="TRANSLATION INITIATION FACTOR IF-2-RELATED"/>
    <property type="match status" value="1"/>
</dbReference>
<dbReference type="Pfam" id="PF22042">
    <property type="entry name" value="EF-G_D2"/>
    <property type="match status" value="1"/>
</dbReference>
<dbReference type="Pfam" id="PF00009">
    <property type="entry name" value="GTP_EFTU"/>
    <property type="match status" value="1"/>
</dbReference>
<dbReference type="Pfam" id="PF03144">
    <property type="entry name" value="GTP_EFTU_D2"/>
    <property type="match status" value="1"/>
</dbReference>
<dbReference type="Pfam" id="PF11987">
    <property type="entry name" value="IF-2"/>
    <property type="match status" value="1"/>
</dbReference>
<dbReference type="Pfam" id="PF08364">
    <property type="entry name" value="IF2_assoc"/>
    <property type="match status" value="1"/>
</dbReference>
<dbReference type="Pfam" id="PF04760">
    <property type="entry name" value="IF2_N"/>
    <property type="match status" value="2"/>
</dbReference>
<dbReference type="SUPFAM" id="SSF52156">
    <property type="entry name" value="Initiation factor IF2/eIF5b, domain 3"/>
    <property type="match status" value="1"/>
</dbReference>
<dbReference type="SUPFAM" id="SSF52540">
    <property type="entry name" value="P-loop containing nucleoside triphosphate hydrolases"/>
    <property type="match status" value="1"/>
</dbReference>
<dbReference type="SUPFAM" id="SSF46955">
    <property type="entry name" value="Putative DNA-binding domain"/>
    <property type="match status" value="1"/>
</dbReference>
<dbReference type="SUPFAM" id="SSF50447">
    <property type="entry name" value="Translation proteins"/>
    <property type="match status" value="2"/>
</dbReference>
<dbReference type="PROSITE" id="PS51722">
    <property type="entry name" value="G_TR_2"/>
    <property type="match status" value="1"/>
</dbReference>
<dbReference type="PROSITE" id="PS01176">
    <property type="entry name" value="IF2"/>
    <property type="match status" value="1"/>
</dbReference>
<sequence length="900" mass="98925">MTDVTVKSLAAEIQTPVDRLVQQFADAGMTKSASDSVTQHEKETLLAHLNRDRGNAPSKLTLQRKTRSTLNVPSTGGKSKSVQIEVRKTRTYVKRDPIEAQQAEEEEQARREAEEQAQRAAEEQVKREADLRETAEKAKRAADEQAKREAAEKAKRDVAEKEKVTNQQNENMTKPAQSEKAKREAEAAELKRKAEETARLKVEEEARRIAEEARRMAEENAGRWEAESATKPEESADYHVTTSHHAREAEDENDRQVEGERRTRTRAAKVTKQKKGNRQSESKADREEARAVTRGGKGKRKPSSLQQSFNKPVQAVNRDVVIGETVTVAELANKMAVKGSQVIKTMMRLGAMATINQVIDQETAQLVAEEMGHKVILRRENELEEAVMSDRDMGVAAEFRAPVVTIMGHVDHGKTSLLDYIRSTKVAAGEAGGITQHIGAYHVETDNGMITFLDTPGHAAFTAMRARGAQATDIVVLVVAADDGVMPQTIEAIQHAKAAQVPVVVAVNKIDKPDADPDRVKTELSQYGIMPEEWGGESQFVHVSAKAGTGIDELLNAILLQAEVLELKAVRSGMANGVVIESFLDKGRGPVATVLVREGTLNKGDIVLCGFEYGRIRAMRDELGREITSAGPSIPVEILGMSGVPAAGDEATVVRDEKKAREVALYRQGKFREVKLARQQKSKLENMFANMTEGEVSELNIVLKSDVQGSCEAISDSLQKLSTDEVKVKIVGSGVGGITETDATLAAASNAIILGFNVRADASARRVVEAESLDLRYYSVIYDLIDEVKQAMSGMLAPEYKQEIIGLAEVRDVFKSPKFGAVAGCMVTEGIVKRHNKIRVLRDNVVIYEGELESLRRFKDDVNEVRNGMECGIGVKNYNDVRPGDMIEVFETIEIKRTIA</sequence>
<comment type="function">
    <text evidence="2">One of the essential components for the initiation of protein synthesis. Protects formylmethionyl-tRNA from spontaneous hydrolysis and promotes its binding to the 30S ribosomal subunits. Also involved in the hydrolysis of GTP during the formation of the 70S ribosomal complex.</text>
</comment>
<comment type="subcellular location">
    <subcellularLocation>
        <location evidence="2">Cytoplasm</location>
    </subcellularLocation>
</comment>
<comment type="similarity">
    <text evidence="2">Belongs to the TRAFAC class translation factor GTPase superfamily. Classic translation factor GTPase family. IF-2 subfamily.</text>
</comment>
<evidence type="ECO:0000250" key="1"/>
<evidence type="ECO:0000255" key="2">
    <source>
        <dbReference type="HAMAP-Rule" id="MF_00100"/>
    </source>
</evidence>
<evidence type="ECO:0000256" key="3">
    <source>
        <dbReference type="SAM" id="MobiDB-lite"/>
    </source>
</evidence>
<name>IF2_PECAS</name>
<accession>Q6D9A5</accession>
<keyword id="KW-0963">Cytoplasm</keyword>
<keyword id="KW-0342">GTP-binding</keyword>
<keyword id="KW-0396">Initiation factor</keyword>
<keyword id="KW-0547">Nucleotide-binding</keyword>
<keyword id="KW-0648">Protein biosynthesis</keyword>
<keyword id="KW-1185">Reference proteome</keyword>